<feature type="chain" id="PRO_0000378323" description="Protein NRT1/ PTR FAMILY 8.2">
    <location>
        <begin position="1"/>
        <end position="570"/>
    </location>
</feature>
<feature type="transmembrane region" description="Helical" evidence="2">
    <location>
        <begin position="100"/>
        <end position="120"/>
    </location>
</feature>
<feature type="transmembrane region" description="Helical" evidence="2">
    <location>
        <begin position="136"/>
        <end position="156"/>
    </location>
</feature>
<feature type="transmembrane region" description="Helical" evidence="2">
    <location>
        <begin position="182"/>
        <end position="202"/>
    </location>
</feature>
<feature type="transmembrane region" description="Helical" evidence="2">
    <location>
        <begin position="210"/>
        <end position="230"/>
    </location>
</feature>
<feature type="transmembrane region" description="Helical" evidence="2">
    <location>
        <begin position="335"/>
        <end position="355"/>
    </location>
</feature>
<feature type="transmembrane region" description="Helical" evidence="2">
    <location>
        <begin position="370"/>
        <end position="390"/>
    </location>
</feature>
<feature type="transmembrane region" description="Helical" evidence="2">
    <location>
        <begin position="414"/>
        <end position="434"/>
    </location>
</feature>
<feature type="transmembrane region" description="Helical" evidence="2">
    <location>
        <begin position="454"/>
        <end position="474"/>
    </location>
</feature>
<feature type="transmembrane region" description="Helical" evidence="2">
    <location>
        <begin position="493"/>
        <end position="513"/>
    </location>
</feature>
<feature type="transmembrane region" description="Helical" evidence="2">
    <location>
        <begin position="537"/>
        <end position="557"/>
    </location>
</feature>
<feature type="modified residue" description="Phosphothreonine" evidence="1">
    <location>
        <position position="99"/>
    </location>
</feature>
<feature type="sequence conflict" description="In Ref. 3; AAO64143 and 4; BAF00365." evidence="5" ref="3 4">
    <original>T</original>
    <variation>A</variation>
    <location>
        <position position="302"/>
    </location>
</feature>
<keyword id="KW-1003">Cell membrane</keyword>
<keyword id="KW-0472">Membrane</keyword>
<keyword id="KW-0571">Peptide transport</keyword>
<keyword id="KW-0597">Phosphoprotein</keyword>
<keyword id="KW-0653">Protein transport</keyword>
<keyword id="KW-1185">Reference proteome</keyword>
<keyword id="KW-0812">Transmembrane</keyword>
<keyword id="KW-1133">Transmembrane helix</keyword>
<keyword id="KW-0813">Transport</keyword>
<accession>Q9LFB8</accession>
<accession>Q0WR84</accession>
<accession>Q84TJ5</accession>
<organism>
    <name type="scientific">Arabidopsis thaliana</name>
    <name type="common">Mouse-ear cress</name>
    <dbReference type="NCBI Taxonomy" id="3702"/>
    <lineage>
        <taxon>Eukaryota</taxon>
        <taxon>Viridiplantae</taxon>
        <taxon>Streptophyta</taxon>
        <taxon>Embryophyta</taxon>
        <taxon>Tracheophyta</taxon>
        <taxon>Spermatophyta</taxon>
        <taxon>Magnoliopsida</taxon>
        <taxon>eudicotyledons</taxon>
        <taxon>Gunneridae</taxon>
        <taxon>Pentapetalae</taxon>
        <taxon>rosids</taxon>
        <taxon>malvids</taxon>
        <taxon>Brassicales</taxon>
        <taxon>Brassicaceae</taxon>
        <taxon>Camelineae</taxon>
        <taxon>Arabidopsis</taxon>
    </lineage>
</organism>
<comment type="function">
    <text evidence="4">Peptide transporter. Mediates the transport of di- and tripeptides. High affinity transporter. Involved in the uptake of peptides during pollen germination and tube growth.</text>
</comment>
<comment type="subcellular location">
    <subcellularLocation>
        <location evidence="4">Cell membrane</location>
        <topology evidence="4">Multi-pass membrane protein</topology>
    </subcellularLocation>
</comment>
<comment type="tissue specificity">
    <text evidence="3 4">Expressed in developing and germinating pollen grains and ovules.</text>
</comment>
<comment type="developmental stage">
    <text evidence="4">Expressed during early seed development.</text>
</comment>
<comment type="disruption phenotype">
    <text evidence="4">No visible phenotype.</text>
</comment>
<comment type="similarity">
    <text evidence="5">Belongs to the major facilitator superfamily. Proton-dependent oligopeptide transporter (POT/PTR) (TC 2.A.17) family.</text>
</comment>
<name>PTR5_ARATH</name>
<evidence type="ECO:0000250" key="1">
    <source>
        <dbReference type="UniProtKB" id="Q05085"/>
    </source>
</evidence>
<evidence type="ECO:0000255" key="2"/>
<evidence type="ECO:0000269" key="3">
    <source>
    </source>
</evidence>
<evidence type="ECO:0000269" key="4">
    <source>
    </source>
</evidence>
<evidence type="ECO:0000305" key="5"/>
<proteinExistence type="evidence at transcript level"/>
<sequence>MEDDKDIYTKDGTLDIHKKPANKNKTGTWKACRFILGTECCERLAYYGMSTNLINYLEKQMNMENVSASKSVSNWSGTCYATPLIGAFIADAYLGRYWTIASFVVIYIAGMTLLTISASVPGLTPTCSGETCHATAGQTAITFIALYLIALGTGGIKPCVSSFGADQFDDTDEKEKESKSSFFNWFYFVINVGAMIASSVLVWIQMNVGWGWGLGVPTVAMAIAVVFFFAGSNFYRLQKPGGSPLTRMLQVIVASCRKSKVKIPEDESLLYENQDAESSIIGSRKLEHTKILTFFDKAAVETESDNKGAAKSSSWKLCTVTQVEELKALIRLLPIWATGIVFASVYSQMGTVFVLQGNTLDQHMGPNFKIPSASLSLFDTLSVLFWAPVYDKLIVPFARKYTGHERGFTQLQRIGIGLVISIFSMVSAGILEVARLNYVQTHNLYNEETIPMTIFWQVPQYFLVGCAEVFTFIGQLEFFYDQAPDAMRSLCSALSLTAIAFGNYLSTFLVTLVTKVTRSGGRPGWIAKNLNNGHLDYFFWLLAGLSFLNFLVYLWIAKWYTYKKTTGHAL</sequence>
<protein>
    <recommendedName>
        <fullName>Protein NRT1/ PTR FAMILY 8.2</fullName>
        <shortName>AtNPF8.2</shortName>
    </recommendedName>
    <alternativeName>
        <fullName>Peptide transporter PTR5</fullName>
    </alternativeName>
</protein>
<gene>
    <name type="primary">NPF8.2</name>
    <name type="synonym">PTR5</name>
    <name type="ordered locus">At5g01180</name>
    <name type="ORF">F7J8.160</name>
</gene>
<reference key="1">
    <citation type="journal article" date="2000" name="Nature">
        <title>Sequence and analysis of chromosome 5 of the plant Arabidopsis thaliana.</title>
        <authorList>
            <person name="Tabata S."/>
            <person name="Kaneko T."/>
            <person name="Nakamura Y."/>
            <person name="Kotani H."/>
            <person name="Kato T."/>
            <person name="Asamizu E."/>
            <person name="Miyajima N."/>
            <person name="Sasamoto S."/>
            <person name="Kimura T."/>
            <person name="Hosouchi T."/>
            <person name="Kawashima K."/>
            <person name="Kohara M."/>
            <person name="Matsumoto M."/>
            <person name="Matsuno A."/>
            <person name="Muraki A."/>
            <person name="Nakayama S."/>
            <person name="Nakazaki N."/>
            <person name="Naruo K."/>
            <person name="Okumura S."/>
            <person name="Shinpo S."/>
            <person name="Takeuchi C."/>
            <person name="Wada T."/>
            <person name="Watanabe A."/>
            <person name="Yamada M."/>
            <person name="Yasuda M."/>
            <person name="Sato S."/>
            <person name="de la Bastide M."/>
            <person name="Huang E."/>
            <person name="Spiegel L."/>
            <person name="Gnoj L."/>
            <person name="O'Shaughnessy A."/>
            <person name="Preston R."/>
            <person name="Habermann K."/>
            <person name="Murray J."/>
            <person name="Johnson D."/>
            <person name="Rohlfing T."/>
            <person name="Nelson J."/>
            <person name="Stoneking T."/>
            <person name="Pepin K."/>
            <person name="Spieth J."/>
            <person name="Sekhon M."/>
            <person name="Armstrong J."/>
            <person name="Becker M."/>
            <person name="Belter E."/>
            <person name="Cordum H."/>
            <person name="Cordes M."/>
            <person name="Courtney L."/>
            <person name="Courtney W."/>
            <person name="Dante M."/>
            <person name="Du H."/>
            <person name="Edwards J."/>
            <person name="Fryman J."/>
            <person name="Haakensen B."/>
            <person name="Lamar E."/>
            <person name="Latreille P."/>
            <person name="Leonard S."/>
            <person name="Meyer R."/>
            <person name="Mulvaney E."/>
            <person name="Ozersky P."/>
            <person name="Riley A."/>
            <person name="Strowmatt C."/>
            <person name="Wagner-McPherson C."/>
            <person name="Wollam A."/>
            <person name="Yoakum M."/>
            <person name="Bell M."/>
            <person name="Dedhia N."/>
            <person name="Parnell L."/>
            <person name="Shah R."/>
            <person name="Rodriguez M."/>
            <person name="Hoon See L."/>
            <person name="Vil D."/>
            <person name="Baker J."/>
            <person name="Kirchoff K."/>
            <person name="Toth K."/>
            <person name="King L."/>
            <person name="Bahret A."/>
            <person name="Miller B."/>
            <person name="Marra M.A."/>
            <person name="Martienssen R."/>
            <person name="McCombie W.R."/>
            <person name="Wilson R.K."/>
            <person name="Murphy G."/>
            <person name="Bancroft I."/>
            <person name="Volckaert G."/>
            <person name="Wambutt R."/>
            <person name="Duesterhoeft A."/>
            <person name="Stiekema W."/>
            <person name="Pohl T."/>
            <person name="Entian K.-D."/>
            <person name="Terryn N."/>
            <person name="Hartley N."/>
            <person name="Bent E."/>
            <person name="Johnson S."/>
            <person name="Langham S.-A."/>
            <person name="McCullagh B."/>
            <person name="Robben J."/>
            <person name="Grymonprez B."/>
            <person name="Zimmermann W."/>
            <person name="Ramsperger U."/>
            <person name="Wedler H."/>
            <person name="Balke K."/>
            <person name="Wedler E."/>
            <person name="Peters S."/>
            <person name="van Staveren M."/>
            <person name="Dirkse W."/>
            <person name="Mooijman P."/>
            <person name="Klein Lankhorst R."/>
            <person name="Weitzenegger T."/>
            <person name="Bothe G."/>
            <person name="Rose M."/>
            <person name="Hauf J."/>
            <person name="Berneiser S."/>
            <person name="Hempel S."/>
            <person name="Feldpausch M."/>
            <person name="Lamberth S."/>
            <person name="Villarroel R."/>
            <person name="Gielen J."/>
            <person name="Ardiles W."/>
            <person name="Bents O."/>
            <person name="Lemcke K."/>
            <person name="Kolesov G."/>
            <person name="Mayer K.F.X."/>
            <person name="Rudd S."/>
            <person name="Schoof H."/>
            <person name="Schueller C."/>
            <person name="Zaccaria P."/>
            <person name="Mewes H.-W."/>
            <person name="Bevan M."/>
            <person name="Fransz P.F."/>
        </authorList>
    </citation>
    <scope>NUCLEOTIDE SEQUENCE [LARGE SCALE GENOMIC DNA]</scope>
    <source>
        <strain>cv. Columbia</strain>
    </source>
</reference>
<reference key="2">
    <citation type="journal article" date="2017" name="Plant J.">
        <title>Araport11: a complete reannotation of the Arabidopsis thaliana reference genome.</title>
        <authorList>
            <person name="Cheng C.Y."/>
            <person name="Krishnakumar V."/>
            <person name="Chan A.P."/>
            <person name="Thibaud-Nissen F."/>
            <person name="Schobel S."/>
            <person name="Town C.D."/>
        </authorList>
    </citation>
    <scope>GENOME REANNOTATION</scope>
    <source>
        <strain>cv. Columbia</strain>
    </source>
</reference>
<reference key="3">
    <citation type="journal article" date="2003" name="Science">
        <title>Empirical analysis of transcriptional activity in the Arabidopsis genome.</title>
        <authorList>
            <person name="Yamada K."/>
            <person name="Lim J."/>
            <person name="Dale J.M."/>
            <person name="Chen H."/>
            <person name="Shinn P."/>
            <person name="Palm C.J."/>
            <person name="Southwick A.M."/>
            <person name="Wu H.C."/>
            <person name="Kim C.J."/>
            <person name="Nguyen M."/>
            <person name="Pham P.K."/>
            <person name="Cheuk R.F."/>
            <person name="Karlin-Newmann G."/>
            <person name="Liu S.X."/>
            <person name="Lam B."/>
            <person name="Sakano H."/>
            <person name="Wu T."/>
            <person name="Yu G."/>
            <person name="Miranda M."/>
            <person name="Quach H.L."/>
            <person name="Tripp M."/>
            <person name="Chang C.H."/>
            <person name="Lee J.M."/>
            <person name="Toriumi M.J."/>
            <person name="Chan M.M."/>
            <person name="Tang C.C."/>
            <person name="Onodera C.S."/>
            <person name="Deng J.M."/>
            <person name="Akiyama K."/>
            <person name="Ansari Y."/>
            <person name="Arakawa T."/>
            <person name="Banh J."/>
            <person name="Banno F."/>
            <person name="Bowser L."/>
            <person name="Brooks S.Y."/>
            <person name="Carninci P."/>
            <person name="Chao Q."/>
            <person name="Choy N."/>
            <person name="Enju A."/>
            <person name="Goldsmith A.D."/>
            <person name="Gurjal M."/>
            <person name="Hansen N.F."/>
            <person name="Hayashizaki Y."/>
            <person name="Johnson-Hopson C."/>
            <person name="Hsuan V.W."/>
            <person name="Iida K."/>
            <person name="Karnes M."/>
            <person name="Khan S."/>
            <person name="Koesema E."/>
            <person name="Ishida J."/>
            <person name="Jiang P.X."/>
            <person name="Jones T."/>
            <person name="Kawai J."/>
            <person name="Kamiya A."/>
            <person name="Meyers C."/>
            <person name="Nakajima M."/>
            <person name="Narusaka M."/>
            <person name="Seki M."/>
            <person name="Sakurai T."/>
            <person name="Satou M."/>
            <person name="Tamse R."/>
            <person name="Vaysberg M."/>
            <person name="Wallender E.K."/>
            <person name="Wong C."/>
            <person name="Yamamura Y."/>
            <person name="Yuan S."/>
            <person name="Shinozaki K."/>
            <person name="Davis R.W."/>
            <person name="Theologis A."/>
            <person name="Ecker J.R."/>
        </authorList>
    </citation>
    <scope>NUCLEOTIDE SEQUENCE [LARGE SCALE MRNA] OF 59-570</scope>
    <source>
        <strain>cv. Columbia</strain>
    </source>
</reference>
<reference key="4">
    <citation type="submission" date="2006-07" db="EMBL/GenBank/DDBJ databases">
        <title>Large-scale analysis of RIKEN Arabidopsis full-length (RAFL) cDNAs.</title>
        <authorList>
            <person name="Totoki Y."/>
            <person name="Seki M."/>
            <person name="Ishida J."/>
            <person name="Nakajima M."/>
            <person name="Enju A."/>
            <person name="Kamiya A."/>
            <person name="Narusaka M."/>
            <person name="Shin-i T."/>
            <person name="Nakagawa M."/>
            <person name="Sakamoto N."/>
            <person name="Oishi K."/>
            <person name="Kohara Y."/>
            <person name="Kobayashi M."/>
            <person name="Toyoda A."/>
            <person name="Sakaki Y."/>
            <person name="Sakurai T."/>
            <person name="Iida K."/>
            <person name="Akiyama K."/>
            <person name="Satou M."/>
            <person name="Toyoda T."/>
            <person name="Konagaya A."/>
            <person name="Carninci P."/>
            <person name="Kawai J."/>
            <person name="Hayashizaki Y."/>
            <person name="Shinozaki K."/>
        </authorList>
    </citation>
    <scope>NUCLEOTIDE SEQUENCE [LARGE SCALE MRNA] OF 60-570</scope>
    <source>
        <strain>cv. Columbia</strain>
    </source>
</reference>
<reference key="5">
    <citation type="journal article" date="2007" name="FEBS Lett.">
        <title>Nitrate transporters and peptide transporters.</title>
        <authorList>
            <person name="Tsay Y.F."/>
            <person name="Chiu C.C."/>
            <person name="Tsai C.B."/>
            <person name="Ho C.H."/>
            <person name="Hsu P.K."/>
        </authorList>
    </citation>
    <scope>TISSUE SPECIFICITY</scope>
    <scope>GENE FAMILY</scope>
</reference>
<reference key="6">
    <citation type="journal article" date="2008" name="Plant Physiol.">
        <title>AtPTR1 and AtPTR5 transport dipeptides in planta.</title>
        <authorList>
            <person name="Komarova N.Y."/>
            <person name="Thor K."/>
            <person name="Gubler A."/>
            <person name="Meier S."/>
            <person name="Dietrich D."/>
            <person name="Weichert A."/>
            <person name="Suter Grotemeyer M."/>
            <person name="Tegeder M."/>
            <person name="Rentsch D."/>
        </authorList>
    </citation>
    <scope>FUNCTION</scope>
    <scope>SUBCELLULAR LOCATION</scope>
    <scope>TISSUE SPECIFICITY</scope>
    <scope>DEVELOPMENTAL STAGE</scope>
    <scope>DISRUPTION PHENOTYPE</scope>
</reference>
<reference key="7">
    <citation type="journal article" date="2014" name="Trends Plant Sci.">
        <title>A unified nomenclature of NITRATE TRANSPORTER 1/PEPTIDE TRANSPORTER family members in plants.</title>
        <authorList>
            <person name="Leran S."/>
            <person name="Varala K."/>
            <person name="Boyer J.C."/>
            <person name="Chiurazzi M."/>
            <person name="Crawford N."/>
            <person name="Daniel-Vedele F."/>
            <person name="David L."/>
            <person name="Dickstein R."/>
            <person name="Fernandez E."/>
            <person name="Forde B."/>
            <person name="Gassmann W."/>
            <person name="Geiger D."/>
            <person name="Gojon A."/>
            <person name="Gong J.M."/>
            <person name="Halkier B.A."/>
            <person name="Harris J.M."/>
            <person name="Hedrich R."/>
            <person name="Limami A.M."/>
            <person name="Rentsch D."/>
            <person name="Seo M."/>
            <person name="Tsay Y.F."/>
            <person name="Zhang M."/>
            <person name="Coruzzi G."/>
            <person name="Lacombe B."/>
        </authorList>
    </citation>
    <scope>GENE FAMILY</scope>
    <scope>NOMENCLATURE</scope>
</reference>
<dbReference type="EMBL" id="AL137189">
    <property type="protein sequence ID" value="CAB69846.1"/>
    <property type="molecule type" value="Genomic_DNA"/>
</dbReference>
<dbReference type="EMBL" id="CP002688">
    <property type="protein sequence ID" value="AED90307.1"/>
    <property type="molecule type" value="Genomic_DNA"/>
</dbReference>
<dbReference type="EMBL" id="CP002688">
    <property type="protein sequence ID" value="ANM69606.1"/>
    <property type="molecule type" value="Genomic_DNA"/>
</dbReference>
<dbReference type="EMBL" id="CP002688">
    <property type="protein sequence ID" value="ANM69607.1"/>
    <property type="molecule type" value="Genomic_DNA"/>
</dbReference>
<dbReference type="EMBL" id="BT005728">
    <property type="protein sequence ID" value="AAO64143.1"/>
    <property type="molecule type" value="mRNA"/>
</dbReference>
<dbReference type="EMBL" id="AK228435">
    <property type="protein sequence ID" value="BAF00365.1"/>
    <property type="molecule type" value="mRNA"/>
</dbReference>
<dbReference type="PIR" id="T45958">
    <property type="entry name" value="T45958"/>
</dbReference>
<dbReference type="RefSeq" id="NP_001331271.1">
    <property type="nucleotide sequence ID" value="NM_001342576.1"/>
</dbReference>
<dbReference type="RefSeq" id="NP_001331272.1">
    <property type="nucleotide sequence ID" value="NM_001342577.1"/>
</dbReference>
<dbReference type="RefSeq" id="NP_195738.1">
    <property type="nucleotide sequence ID" value="NM_120196.4"/>
</dbReference>
<dbReference type="SMR" id="Q9LFB8"/>
<dbReference type="BioGRID" id="17001">
    <property type="interactions" value="25"/>
</dbReference>
<dbReference type="FunCoup" id="Q9LFB8">
    <property type="interactions" value="1547"/>
</dbReference>
<dbReference type="IntAct" id="Q9LFB8">
    <property type="interactions" value="25"/>
</dbReference>
<dbReference type="STRING" id="3702.Q9LFB8"/>
<dbReference type="TCDB" id="2.A.17.3.8">
    <property type="family name" value="the proton-dependent oligopeptide transporter (pot/ptr) family"/>
</dbReference>
<dbReference type="PaxDb" id="3702-AT5G01180.1"/>
<dbReference type="ProteomicsDB" id="224840"/>
<dbReference type="EnsemblPlants" id="AT5G01180.1">
    <property type="protein sequence ID" value="AT5G01180.1"/>
    <property type="gene ID" value="AT5G01180"/>
</dbReference>
<dbReference type="EnsemblPlants" id="AT5G01180.2">
    <property type="protein sequence ID" value="AT5G01180.2"/>
    <property type="gene ID" value="AT5G01180"/>
</dbReference>
<dbReference type="EnsemblPlants" id="AT5G01180.3">
    <property type="protein sequence ID" value="AT5G01180.3"/>
    <property type="gene ID" value="AT5G01180"/>
</dbReference>
<dbReference type="GeneID" id="831725"/>
<dbReference type="Gramene" id="AT5G01180.1">
    <property type="protein sequence ID" value="AT5G01180.1"/>
    <property type="gene ID" value="AT5G01180"/>
</dbReference>
<dbReference type="Gramene" id="AT5G01180.2">
    <property type="protein sequence ID" value="AT5G01180.2"/>
    <property type="gene ID" value="AT5G01180"/>
</dbReference>
<dbReference type="Gramene" id="AT5G01180.3">
    <property type="protein sequence ID" value="AT5G01180.3"/>
    <property type="gene ID" value="AT5G01180"/>
</dbReference>
<dbReference type="KEGG" id="ath:AT5G01180"/>
<dbReference type="Araport" id="AT5G01180"/>
<dbReference type="TAIR" id="AT5G01180">
    <property type="gene designation" value="NPF8.2"/>
</dbReference>
<dbReference type="eggNOG" id="KOG1237">
    <property type="taxonomic scope" value="Eukaryota"/>
</dbReference>
<dbReference type="HOGENOM" id="CLU_009313_4_1_1"/>
<dbReference type="InParanoid" id="Q9LFB8"/>
<dbReference type="OMA" id="MGACAIF"/>
<dbReference type="PhylomeDB" id="Q9LFB8"/>
<dbReference type="BRENDA" id="7.4.2.5">
    <property type="organism ID" value="399"/>
</dbReference>
<dbReference type="PRO" id="PR:Q9LFB8"/>
<dbReference type="Proteomes" id="UP000006548">
    <property type="component" value="Chromosome 5"/>
</dbReference>
<dbReference type="ExpressionAtlas" id="Q9LFB8">
    <property type="expression patterns" value="baseline and differential"/>
</dbReference>
<dbReference type="GO" id="GO:0005886">
    <property type="term" value="C:plasma membrane"/>
    <property type="evidence" value="ECO:0000314"/>
    <property type="project" value="TAIR"/>
</dbReference>
<dbReference type="GO" id="GO:0071916">
    <property type="term" value="F:dipeptide transmembrane transporter activity"/>
    <property type="evidence" value="ECO:0000314"/>
    <property type="project" value="TAIR"/>
</dbReference>
<dbReference type="GO" id="GO:0042938">
    <property type="term" value="P:dipeptide transport"/>
    <property type="evidence" value="ECO:0000314"/>
    <property type="project" value="TAIR"/>
</dbReference>
<dbReference type="GO" id="GO:0009860">
    <property type="term" value="P:pollen tube growth"/>
    <property type="evidence" value="ECO:0000315"/>
    <property type="project" value="TAIR"/>
</dbReference>
<dbReference type="GO" id="GO:0015031">
    <property type="term" value="P:protein transport"/>
    <property type="evidence" value="ECO:0007669"/>
    <property type="project" value="UniProtKB-KW"/>
</dbReference>
<dbReference type="CDD" id="cd17418">
    <property type="entry name" value="MFS_NPF8"/>
    <property type="match status" value="1"/>
</dbReference>
<dbReference type="Gene3D" id="1.20.1250.20">
    <property type="entry name" value="MFS general substrate transporter like domains"/>
    <property type="match status" value="1"/>
</dbReference>
<dbReference type="InterPro" id="IPR036259">
    <property type="entry name" value="MFS_trans_sf"/>
</dbReference>
<dbReference type="InterPro" id="IPR000109">
    <property type="entry name" value="POT_fam"/>
</dbReference>
<dbReference type="InterPro" id="IPR018456">
    <property type="entry name" value="PTR2_symporter_CS"/>
</dbReference>
<dbReference type="PANTHER" id="PTHR11654">
    <property type="entry name" value="OLIGOPEPTIDE TRANSPORTER-RELATED"/>
    <property type="match status" value="1"/>
</dbReference>
<dbReference type="Pfam" id="PF00854">
    <property type="entry name" value="PTR2"/>
    <property type="match status" value="1"/>
</dbReference>
<dbReference type="SUPFAM" id="SSF103473">
    <property type="entry name" value="MFS general substrate transporter"/>
    <property type="match status" value="1"/>
</dbReference>
<dbReference type="PROSITE" id="PS01022">
    <property type="entry name" value="PTR2_1"/>
    <property type="match status" value="1"/>
</dbReference>
<dbReference type="PROSITE" id="PS01023">
    <property type="entry name" value="PTR2_2"/>
    <property type="match status" value="1"/>
</dbReference>